<reference key="1">
    <citation type="journal article" date="2004" name="Proc. Natl. Acad. Sci. U.S.A.">
        <title>The louse-borne human pathogen Bartonella quintana is a genomic derivative of the zoonotic agent Bartonella henselae.</title>
        <authorList>
            <person name="Alsmark U.C.M."/>
            <person name="Frank A.C."/>
            <person name="Karlberg E.O."/>
            <person name="Legault B.-A."/>
            <person name="Ardell D.H."/>
            <person name="Canbaeck B."/>
            <person name="Eriksson A.-S."/>
            <person name="Naeslund A.K."/>
            <person name="Handley S.A."/>
            <person name="Huvet M."/>
            <person name="La Scola B."/>
            <person name="Holmberg M."/>
            <person name="Andersson S.G.E."/>
        </authorList>
    </citation>
    <scope>NUCLEOTIDE SEQUENCE [LARGE SCALE GENOMIC DNA]</scope>
    <source>
        <strain>ATCC 49882 / DSM 28221 / CCUG 30454 / Houston 1</strain>
    </source>
</reference>
<comment type="function">
    <text evidence="1">Part of the twin-arginine translocation (Tat) system that transports large folded proteins containing a characteristic twin-arginine motif in their signal peptide across membranes. TatA could form the protein-conducting channel of the Tat system.</text>
</comment>
<comment type="subunit">
    <text evidence="1">The Tat system comprises two distinct complexes: a TatABC complex, containing multiple copies of TatA, TatB and TatC subunits, and a separate TatA complex, containing only TatA subunits. Substrates initially bind to the TatABC complex, which probably triggers association of the separate TatA complex to form the active translocon.</text>
</comment>
<comment type="subcellular location">
    <subcellularLocation>
        <location evidence="1">Cell inner membrane</location>
        <topology evidence="1">Single-pass membrane protein</topology>
    </subcellularLocation>
</comment>
<comment type="similarity">
    <text evidence="1">Belongs to the TatA/E family.</text>
</comment>
<accession>Q6G422</accession>
<evidence type="ECO:0000255" key="1">
    <source>
        <dbReference type="HAMAP-Rule" id="MF_00236"/>
    </source>
</evidence>
<evidence type="ECO:0000256" key="2">
    <source>
        <dbReference type="SAM" id="MobiDB-lite"/>
    </source>
</evidence>
<keyword id="KW-0997">Cell inner membrane</keyword>
<keyword id="KW-1003">Cell membrane</keyword>
<keyword id="KW-0472">Membrane</keyword>
<keyword id="KW-0653">Protein transport</keyword>
<keyword id="KW-0811">Translocation</keyword>
<keyword id="KW-0812">Transmembrane</keyword>
<keyword id="KW-1133">Transmembrane helix</keyword>
<keyword id="KW-0813">Transport</keyword>
<organism>
    <name type="scientific">Bartonella henselae (strain ATCC 49882 / DSM 28221 / CCUG 30454 / Houston 1)</name>
    <name type="common">Rochalimaea henselae</name>
    <dbReference type="NCBI Taxonomy" id="283166"/>
    <lineage>
        <taxon>Bacteria</taxon>
        <taxon>Pseudomonadati</taxon>
        <taxon>Pseudomonadota</taxon>
        <taxon>Alphaproteobacteria</taxon>
        <taxon>Hyphomicrobiales</taxon>
        <taxon>Bartonellaceae</taxon>
        <taxon>Bartonella</taxon>
    </lineage>
</organism>
<name>TATA_BARHE</name>
<feature type="chain" id="PRO_1000071807" description="Sec-independent protein translocase protein TatA">
    <location>
        <begin position="1"/>
        <end position="103"/>
    </location>
</feature>
<feature type="transmembrane region" description="Helical" evidence="1">
    <location>
        <begin position="1"/>
        <end position="21"/>
    </location>
</feature>
<feature type="region of interest" description="Disordered" evidence="2">
    <location>
        <begin position="77"/>
        <end position="103"/>
    </location>
</feature>
<feature type="compositionally biased region" description="Basic residues" evidence="2">
    <location>
        <begin position="90"/>
        <end position="103"/>
    </location>
</feature>
<protein>
    <recommendedName>
        <fullName evidence="1">Sec-independent protein translocase protein TatA</fullName>
    </recommendedName>
</protein>
<dbReference type="EMBL" id="BX897699">
    <property type="protein sequence ID" value="CAF27366.1"/>
    <property type="molecule type" value="Genomic_DNA"/>
</dbReference>
<dbReference type="RefSeq" id="WP_011180487.1">
    <property type="nucleotide sequence ID" value="NZ_LRIJ02000001.1"/>
</dbReference>
<dbReference type="SMR" id="Q6G422"/>
<dbReference type="PaxDb" id="283166-BH05580"/>
<dbReference type="EnsemblBacteria" id="CAF27366">
    <property type="protein sequence ID" value="CAF27366"/>
    <property type="gene ID" value="BH05580"/>
</dbReference>
<dbReference type="GeneID" id="92985217"/>
<dbReference type="KEGG" id="bhe:BH05580"/>
<dbReference type="eggNOG" id="COG1826">
    <property type="taxonomic scope" value="Bacteria"/>
</dbReference>
<dbReference type="Proteomes" id="UP000000421">
    <property type="component" value="Chromosome"/>
</dbReference>
<dbReference type="GO" id="GO:0033281">
    <property type="term" value="C:TAT protein transport complex"/>
    <property type="evidence" value="ECO:0007669"/>
    <property type="project" value="UniProtKB-UniRule"/>
</dbReference>
<dbReference type="GO" id="GO:0008320">
    <property type="term" value="F:protein transmembrane transporter activity"/>
    <property type="evidence" value="ECO:0007669"/>
    <property type="project" value="UniProtKB-UniRule"/>
</dbReference>
<dbReference type="GO" id="GO:0043953">
    <property type="term" value="P:protein transport by the Tat complex"/>
    <property type="evidence" value="ECO:0007669"/>
    <property type="project" value="UniProtKB-UniRule"/>
</dbReference>
<dbReference type="Gene3D" id="1.20.5.3310">
    <property type="match status" value="1"/>
</dbReference>
<dbReference type="HAMAP" id="MF_00236">
    <property type="entry name" value="TatA_E"/>
    <property type="match status" value="1"/>
</dbReference>
<dbReference type="InterPro" id="IPR003369">
    <property type="entry name" value="TatA/B/E"/>
</dbReference>
<dbReference type="InterPro" id="IPR006312">
    <property type="entry name" value="TatA/E"/>
</dbReference>
<dbReference type="NCBIfam" id="TIGR01411">
    <property type="entry name" value="tatAE"/>
    <property type="match status" value="1"/>
</dbReference>
<dbReference type="PANTHER" id="PTHR42982">
    <property type="entry name" value="SEC-INDEPENDENT PROTEIN TRANSLOCASE PROTEIN TATA"/>
    <property type="match status" value="1"/>
</dbReference>
<dbReference type="PANTHER" id="PTHR42982:SF1">
    <property type="entry name" value="SEC-INDEPENDENT PROTEIN TRANSLOCASE PROTEIN TATA"/>
    <property type="match status" value="1"/>
</dbReference>
<dbReference type="Pfam" id="PF02416">
    <property type="entry name" value="TatA_B_E"/>
    <property type="match status" value="1"/>
</dbReference>
<gene>
    <name evidence="1" type="primary">tatA</name>
    <name type="ordered locus">BH05580</name>
</gene>
<sequence>MGNIFSPTHLIVILLIIIVLFGRGKVSELMGDVAKGIKAFKKNMKDEEDILEDKLERAHHSETVDVEPQKFQSLSVKRATTRVKGSSSSRKGKTSVVKKQRVK</sequence>
<proteinExistence type="inferred from homology"/>